<feature type="chain" id="PRO_1000024882" description="Ribonuclease PH">
    <location>
        <begin position="1"/>
        <end position="237"/>
    </location>
</feature>
<feature type="binding site" evidence="1">
    <location>
        <position position="86"/>
    </location>
    <ligand>
        <name>phosphate</name>
        <dbReference type="ChEBI" id="CHEBI:43474"/>
        <note>substrate</note>
    </ligand>
</feature>
<feature type="binding site" evidence="1">
    <location>
        <begin position="124"/>
        <end position="126"/>
    </location>
    <ligand>
        <name>phosphate</name>
        <dbReference type="ChEBI" id="CHEBI:43474"/>
        <note>substrate</note>
    </ligand>
</feature>
<sequence length="237" mass="25572">MRPSNRTPAQTRPITITRSFTAHAEGSVLVEFGDTKVLCTASFTEGVPRFLKGQGQGWVTAEYGMLPRSTHSRMDREAARGKQSGRTQEIQRLIGRALRAAVDMKLLGENTIVIDCDVIQADGGTRTAAITGACVALVDALNWARGKGIIKANPLKFLIAAVSVGIYKGEAISDLEYIEDSAAETDMNVVMTETGKIIEIQGTAEGEPFSHEELLELLVLAKNSIREIVDVQKAALS</sequence>
<protein>
    <recommendedName>
        <fullName evidence="1">Ribonuclease PH</fullName>
        <shortName evidence="1">RNase PH</shortName>
        <ecNumber evidence="1">2.7.7.56</ecNumber>
    </recommendedName>
    <alternativeName>
        <fullName evidence="1">tRNA nucleotidyltransferase</fullName>
    </alternativeName>
</protein>
<name>RNPH_SHEFN</name>
<proteinExistence type="inferred from homology"/>
<keyword id="KW-0548">Nucleotidyltransferase</keyword>
<keyword id="KW-1185">Reference proteome</keyword>
<keyword id="KW-0694">RNA-binding</keyword>
<keyword id="KW-0698">rRNA processing</keyword>
<keyword id="KW-0808">Transferase</keyword>
<keyword id="KW-0819">tRNA processing</keyword>
<keyword id="KW-0820">tRNA-binding</keyword>
<accession>Q07WF3</accession>
<organism>
    <name type="scientific">Shewanella frigidimarina (strain NCIMB 400)</name>
    <dbReference type="NCBI Taxonomy" id="318167"/>
    <lineage>
        <taxon>Bacteria</taxon>
        <taxon>Pseudomonadati</taxon>
        <taxon>Pseudomonadota</taxon>
        <taxon>Gammaproteobacteria</taxon>
        <taxon>Alteromonadales</taxon>
        <taxon>Shewanellaceae</taxon>
        <taxon>Shewanella</taxon>
    </lineage>
</organism>
<dbReference type="EC" id="2.7.7.56" evidence="1"/>
<dbReference type="EMBL" id="CP000447">
    <property type="protein sequence ID" value="ABI73661.1"/>
    <property type="molecule type" value="Genomic_DNA"/>
</dbReference>
<dbReference type="RefSeq" id="WP_011639245.1">
    <property type="nucleotide sequence ID" value="NC_008345.1"/>
</dbReference>
<dbReference type="SMR" id="Q07WF3"/>
<dbReference type="STRING" id="318167.Sfri_3836"/>
<dbReference type="GeneID" id="90571034"/>
<dbReference type="KEGG" id="sfr:Sfri_3836"/>
<dbReference type="eggNOG" id="COG0689">
    <property type="taxonomic scope" value="Bacteria"/>
</dbReference>
<dbReference type="HOGENOM" id="CLU_050858_0_0_6"/>
<dbReference type="OrthoDB" id="9802265at2"/>
<dbReference type="Proteomes" id="UP000000684">
    <property type="component" value="Chromosome"/>
</dbReference>
<dbReference type="GO" id="GO:0000175">
    <property type="term" value="F:3'-5'-RNA exonuclease activity"/>
    <property type="evidence" value="ECO:0007669"/>
    <property type="project" value="UniProtKB-UniRule"/>
</dbReference>
<dbReference type="GO" id="GO:0000049">
    <property type="term" value="F:tRNA binding"/>
    <property type="evidence" value="ECO:0007669"/>
    <property type="project" value="UniProtKB-UniRule"/>
</dbReference>
<dbReference type="GO" id="GO:0009022">
    <property type="term" value="F:tRNA nucleotidyltransferase activity"/>
    <property type="evidence" value="ECO:0007669"/>
    <property type="project" value="UniProtKB-UniRule"/>
</dbReference>
<dbReference type="GO" id="GO:0016075">
    <property type="term" value="P:rRNA catabolic process"/>
    <property type="evidence" value="ECO:0007669"/>
    <property type="project" value="UniProtKB-UniRule"/>
</dbReference>
<dbReference type="GO" id="GO:0006364">
    <property type="term" value="P:rRNA processing"/>
    <property type="evidence" value="ECO:0007669"/>
    <property type="project" value="UniProtKB-KW"/>
</dbReference>
<dbReference type="GO" id="GO:0008033">
    <property type="term" value="P:tRNA processing"/>
    <property type="evidence" value="ECO:0007669"/>
    <property type="project" value="UniProtKB-UniRule"/>
</dbReference>
<dbReference type="CDD" id="cd11362">
    <property type="entry name" value="RNase_PH_bact"/>
    <property type="match status" value="1"/>
</dbReference>
<dbReference type="FunFam" id="3.30.230.70:FF:000003">
    <property type="entry name" value="Ribonuclease PH"/>
    <property type="match status" value="1"/>
</dbReference>
<dbReference type="Gene3D" id="3.30.230.70">
    <property type="entry name" value="GHMP Kinase, N-terminal domain"/>
    <property type="match status" value="1"/>
</dbReference>
<dbReference type="HAMAP" id="MF_00564">
    <property type="entry name" value="RNase_PH"/>
    <property type="match status" value="1"/>
</dbReference>
<dbReference type="InterPro" id="IPR001247">
    <property type="entry name" value="ExoRNase_PH_dom1"/>
</dbReference>
<dbReference type="InterPro" id="IPR015847">
    <property type="entry name" value="ExoRNase_PH_dom2"/>
</dbReference>
<dbReference type="InterPro" id="IPR036345">
    <property type="entry name" value="ExoRNase_PH_dom2_sf"/>
</dbReference>
<dbReference type="InterPro" id="IPR027408">
    <property type="entry name" value="PNPase/RNase_PH_dom_sf"/>
</dbReference>
<dbReference type="InterPro" id="IPR020568">
    <property type="entry name" value="Ribosomal_Su5_D2-typ_SF"/>
</dbReference>
<dbReference type="InterPro" id="IPR050080">
    <property type="entry name" value="RNase_PH"/>
</dbReference>
<dbReference type="InterPro" id="IPR002381">
    <property type="entry name" value="RNase_PH_bac-type"/>
</dbReference>
<dbReference type="InterPro" id="IPR018336">
    <property type="entry name" value="RNase_PH_CS"/>
</dbReference>
<dbReference type="NCBIfam" id="TIGR01966">
    <property type="entry name" value="RNasePH"/>
    <property type="match status" value="1"/>
</dbReference>
<dbReference type="PANTHER" id="PTHR11953">
    <property type="entry name" value="EXOSOME COMPLEX COMPONENT"/>
    <property type="match status" value="1"/>
</dbReference>
<dbReference type="PANTHER" id="PTHR11953:SF0">
    <property type="entry name" value="EXOSOME COMPLEX COMPONENT RRP41"/>
    <property type="match status" value="1"/>
</dbReference>
<dbReference type="Pfam" id="PF01138">
    <property type="entry name" value="RNase_PH"/>
    <property type="match status" value="1"/>
</dbReference>
<dbReference type="Pfam" id="PF03725">
    <property type="entry name" value="RNase_PH_C"/>
    <property type="match status" value="1"/>
</dbReference>
<dbReference type="SUPFAM" id="SSF55666">
    <property type="entry name" value="Ribonuclease PH domain 2-like"/>
    <property type="match status" value="1"/>
</dbReference>
<dbReference type="SUPFAM" id="SSF54211">
    <property type="entry name" value="Ribosomal protein S5 domain 2-like"/>
    <property type="match status" value="1"/>
</dbReference>
<dbReference type="PROSITE" id="PS01277">
    <property type="entry name" value="RIBONUCLEASE_PH"/>
    <property type="match status" value="1"/>
</dbReference>
<evidence type="ECO:0000255" key="1">
    <source>
        <dbReference type="HAMAP-Rule" id="MF_00564"/>
    </source>
</evidence>
<gene>
    <name evidence="1" type="primary">rph</name>
    <name type="ordered locus">Sfri_3836</name>
</gene>
<comment type="function">
    <text evidence="1">Phosphorolytic 3'-5' exoribonuclease that plays an important role in tRNA 3'-end maturation. Removes nucleotide residues following the 3'-CCA terminus of tRNAs; can also add nucleotides to the ends of RNA molecules by using nucleoside diphosphates as substrates, but this may not be physiologically important. Probably plays a role in initiation of 16S rRNA degradation (leading to ribosome degradation) during starvation.</text>
</comment>
<comment type="catalytic activity">
    <reaction evidence="1">
        <text>tRNA(n+1) + phosphate = tRNA(n) + a ribonucleoside 5'-diphosphate</text>
        <dbReference type="Rhea" id="RHEA:10628"/>
        <dbReference type="Rhea" id="RHEA-COMP:17343"/>
        <dbReference type="Rhea" id="RHEA-COMP:17344"/>
        <dbReference type="ChEBI" id="CHEBI:43474"/>
        <dbReference type="ChEBI" id="CHEBI:57930"/>
        <dbReference type="ChEBI" id="CHEBI:173114"/>
        <dbReference type="EC" id="2.7.7.56"/>
    </reaction>
</comment>
<comment type="subunit">
    <text evidence="1">Homohexameric ring arranged as a trimer of dimers.</text>
</comment>
<comment type="similarity">
    <text evidence="1">Belongs to the RNase PH family.</text>
</comment>
<reference key="1">
    <citation type="submission" date="2006-08" db="EMBL/GenBank/DDBJ databases">
        <title>Complete sequence of Shewanella frigidimarina NCIMB 400.</title>
        <authorList>
            <consortium name="US DOE Joint Genome Institute"/>
            <person name="Copeland A."/>
            <person name="Lucas S."/>
            <person name="Lapidus A."/>
            <person name="Barry K."/>
            <person name="Detter J.C."/>
            <person name="Glavina del Rio T."/>
            <person name="Hammon N."/>
            <person name="Israni S."/>
            <person name="Dalin E."/>
            <person name="Tice H."/>
            <person name="Pitluck S."/>
            <person name="Fredrickson J.K."/>
            <person name="Kolker E."/>
            <person name="McCuel L.A."/>
            <person name="DiChristina T."/>
            <person name="Nealson K.H."/>
            <person name="Newman D."/>
            <person name="Tiedje J.M."/>
            <person name="Zhou J."/>
            <person name="Romine M.F."/>
            <person name="Culley D.E."/>
            <person name="Serres M."/>
            <person name="Chertkov O."/>
            <person name="Brettin T."/>
            <person name="Bruce D."/>
            <person name="Han C."/>
            <person name="Tapia R."/>
            <person name="Gilna P."/>
            <person name="Schmutz J."/>
            <person name="Larimer F."/>
            <person name="Land M."/>
            <person name="Hauser L."/>
            <person name="Kyrpides N."/>
            <person name="Mikhailova N."/>
            <person name="Richardson P."/>
        </authorList>
    </citation>
    <scope>NUCLEOTIDE SEQUENCE [LARGE SCALE GENOMIC DNA]</scope>
    <source>
        <strain>NCIMB 400</strain>
    </source>
</reference>